<reference key="1">
    <citation type="journal article" date="2008" name="Peptides">
        <title>Conorfamide-Sr2, a gamma-carboxyglutamate-containing FMRFamide-related peptide from the venom of Conus spurius with activity in mice and mollusks.</title>
        <authorList>
            <person name="Aguilar M.B."/>
            <person name="Luna-Ramirez K.S."/>
            <person name="Echeverria D."/>
            <person name="Falcon A."/>
            <person name="Olivera B.M."/>
            <person name="Heimer de la Cotera E.P."/>
            <person name="Maillo M."/>
        </authorList>
    </citation>
    <scope>PROTEIN SEQUENCE</scope>
    <scope>FUNCTION</scope>
    <scope>BIOASSAY</scope>
    <scope>SUBCELLULAR LOCATION</scope>
    <scope>MASS SPECTROMETRY</scope>
    <scope>GAMMA-CARBOXYGLUTAMATION AT GLU-4 AND GLU-8</scope>
    <scope>AMIDATION AT ILE-12</scope>
    <source>
        <tissue>Venom</tissue>
    </source>
</reference>
<reference key="2">
    <citation type="journal article" date="2018" name="Toxicon">
        <title>Conopeptides promote itch through human itch receptor hMgprX1.</title>
        <authorList>
            <person name="Espino S.S."/>
            <person name="Robinson S.D."/>
            <person name="Safavi-Hemami H."/>
            <person name="Gajewiak J."/>
            <person name="Yang W."/>
            <person name="Olivera B.M."/>
            <person name="Liu Q."/>
        </authorList>
    </citation>
    <scope>FUNCTION</scope>
    <scope>SYNTHESIS</scope>
</reference>
<name>CRFA2_CONSP</name>
<dbReference type="ConoServer" id="3538">
    <property type="toxin name" value="Conorfamide-Sr2"/>
</dbReference>
<dbReference type="GO" id="GO:0005576">
    <property type="term" value="C:extracellular region"/>
    <property type="evidence" value="ECO:0000314"/>
    <property type="project" value="UniProtKB"/>
</dbReference>
<dbReference type="GO" id="GO:0090729">
    <property type="term" value="F:toxin activity"/>
    <property type="evidence" value="ECO:0000314"/>
    <property type="project" value="UniProtKB"/>
</dbReference>
<dbReference type="GO" id="GO:0044616">
    <property type="term" value="P:venom-mediated paralysis in another organism"/>
    <property type="evidence" value="ECO:0000314"/>
    <property type="project" value="UniProtKB"/>
</dbReference>
<comment type="function">
    <text evidence="2">In contrast to other conorfamides, this peptide does not show activity on human and mouse sensory neuron-specific G-protein coupled receptors MRGPRX1 (PubMed:30243794). In vivo, it causes hyperactivity when injected intracranially into mice, and when injected into the foot of the fresh water snail P.paludosa (PubMed:18201803). It also causes paralysis when injected into the foot of the limpet P.opea (PubMed:18201803). Has no effect when injected below the rear part of the dorsal fin of the fish L.reticulatus (PubMed:18201803).</text>
</comment>
<comment type="subcellular location">
    <subcellularLocation>
        <location evidence="2">Secreted</location>
    </subcellularLocation>
</comment>
<comment type="tissue specificity">
    <text evidence="5">Expressed by the venom duct.</text>
</comment>
<comment type="mass spectrometry" mass="1468.7" method="Electrospray" evidence="2"/>
<comment type="miscellaneous">
    <text evidence="4">The mature peptide does not contain cysteine residue.</text>
</comment>
<comment type="similarity">
    <text evidence="4">Belongs to the FARP (FMRFamide related peptide) family.</text>
</comment>
<proteinExistence type="evidence at protein level"/>
<feature type="peptide" id="PRO_0000343533" description="Conorfamide-Sr2" evidence="2">
    <location>
        <begin position="1"/>
        <end position="12"/>
    </location>
</feature>
<feature type="modified residue" description="4-carboxyglutamate" evidence="2">
    <location>
        <position position="4"/>
    </location>
</feature>
<feature type="modified residue" description="4-carboxyglutamate" evidence="2">
    <location>
        <position position="8"/>
    </location>
</feature>
<feature type="modified residue" description="Isoleucine amide" evidence="2">
    <location>
        <position position="12"/>
    </location>
</feature>
<sequence length="12" mass="1383">GPMEDPLEIIRI</sequence>
<evidence type="ECO:0000250" key="1">
    <source>
        <dbReference type="UniProtKB" id="P0DOZ7"/>
    </source>
</evidence>
<evidence type="ECO:0000269" key="2">
    <source>
    </source>
</evidence>
<evidence type="ECO:0000303" key="3">
    <source>
    </source>
</evidence>
<evidence type="ECO:0000305" key="4"/>
<evidence type="ECO:0000305" key="5">
    <source>
    </source>
</evidence>
<protein>
    <recommendedName>
        <fullName evidence="4">Conorfamide-Sr2</fullName>
        <shortName evidence="1">CNF-Sr2</shortName>
    </recommendedName>
    <alternativeName>
        <fullName evidence="3">Cono-RFamide-Sr2</fullName>
    </alternativeName>
</protein>
<keyword id="KW-0027">Amidation</keyword>
<keyword id="KW-0903">Direct protein sequencing</keyword>
<keyword id="KW-0301">Gamma-carboxyglutamic acid</keyword>
<keyword id="KW-0528">Neurotoxin</keyword>
<keyword id="KW-0964">Secreted</keyword>
<keyword id="KW-0800">Toxin</keyword>
<organism>
    <name type="scientific">Conus spurius</name>
    <name type="common">Alphabet cone</name>
    <dbReference type="NCBI Taxonomy" id="192919"/>
    <lineage>
        <taxon>Eukaryota</taxon>
        <taxon>Metazoa</taxon>
        <taxon>Spiralia</taxon>
        <taxon>Lophotrochozoa</taxon>
        <taxon>Mollusca</taxon>
        <taxon>Gastropoda</taxon>
        <taxon>Caenogastropoda</taxon>
        <taxon>Neogastropoda</taxon>
        <taxon>Conoidea</taxon>
        <taxon>Conidae</taxon>
        <taxon>Conus</taxon>
        <taxon>Lindaconus</taxon>
    </lineage>
</organism>
<accession>P85871</accession>